<organism>
    <name type="scientific">Streptomyces avermitilis (strain ATCC 31267 / DSM 46492 / JCM 5070 / NBRC 14893 / NCIMB 12804 / NRRL 8165 / MA-4680)</name>
    <dbReference type="NCBI Taxonomy" id="227882"/>
    <lineage>
        <taxon>Bacteria</taxon>
        <taxon>Bacillati</taxon>
        <taxon>Actinomycetota</taxon>
        <taxon>Actinomycetes</taxon>
        <taxon>Kitasatosporales</taxon>
        <taxon>Streptomycetaceae</taxon>
        <taxon>Streptomyces</taxon>
    </lineage>
</organism>
<gene>
    <name evidence="1" type="primary">eno</name>
    <name type="ordered locus">SAV_3533</name>
</gene>
<evidence type="ECO:0000255" key="1">
    <source>
        <dbReference type="HAMAP-Rule" id="MF_00318"/>
    </source>
</evidence>
<protein>
    <recommendedName>
        <fullName evidence="1">Enolase</fullName>
        <ecNumber evidence="1">4.2.1.11</ecNumber>
    </recommendedName>
    <alternativeName>
        <fullName evidence="1">2-phospho-D-glycerate hydro-lyase</fullName>
    </alternativeName>
    <alternativeName>
        <fullName evidence="1">2-phosphoglycerate dehydratase</fullName>
    </alternativeName>
</protein>
<reference key="1">
    <citation type="journal article" date="2001" name="Proc. Natl. Acad. Sci. U.S.A.">
        <title>Genome sequence of an industrial microorganism Streptomyces avermitilis: deducing the ability of producing secondary metabolites.</title>
        <authorList>
            <person name="Omura S."/>
            <person name="Ikeda H."/>
            <person name="Ishikawa J."/>
            <person name="Hanamoto A."/>
            <person name="Takahashi C."/>
            <person name="Shinose M."/>
            <person name="Takahashi Y."/>
            <person name="Horikawa H."/>
            <person name="Nakazawa H."/>
            <person name="Osonoe T."/>
            <person name="Kikuchi H."/>
            <person name="Shiba T."/>
            <person name="Sakaki Y."/>
            <person name="Hattori M."/>
        </authorList>
    </citation>
    <scope>NUCLEOTIDE SEQUENCE [LARGE SCALE GENOMIC DNA]</scope>
    <source>
        <strain>ATCC 31267 / DSM 46492 / JCM 5070 / NBRC 14893 / NCIMB 12804 / NRRL 8165 / MA-4680</strain>
    </source>
</reference>
<reference key="2">
    <citation type="journal article" date="2003" name="Nat. Biotechnol.">
        <title>Complete genome sequence and comparative analysis of the industrial microorganism Streptomyces avermitilis.</title>
        <authorList>
            <person name="Ikeda H."/>
            <person name="Ishikawa J."/>
            <person name="Hanamoto A."/>
            <person name="Shinose M."/>
            <person name="Kikuchi H."/>
            <person name="Shiba T."/>
            <person name="Sakaki Y."/>
            <person name="Hattori M."/>
            <person name="Omura S."/>
        </authorList>
    </citation>
    <scope>NUCLEOTIDE SEQUENCE [LARGE SCALE GENOMIC DNA]</scope>
    <source>
        <strain>ATCC 31267 / DSM 46492 / JCM 5070 / NBRC 14893 / NCIMB 12804 / NRRL 8165 / MA-4680</strain>
    </source>
</reference>
<dbReference type="EC" id="4.2.1.11" evidence="1"/>
<dbReference type="EMBL" id="BA000030">
    <property type="protein sequence ID" value="BAC71245.1"/>
    <property type="molecule type" value="Genomic_DNA"/>
</dbReference>
<dbReference type="SMR" id="Q82HH5"/>
<dbReference type="KEGG" id="sma:SAVERM_3533"/>
<dbReference type="eggNOG" id="COG0148">
    <property type="taxonomic scope" value="Bacteria"/>
</dbReference>
<dbReference type="HOGENOM" id="CLU_031223_2_1_11"/>
<dbReference type="UniPathway" id="UPA00109">
    <property type="reaction ID" value="UER00187"/>
</dbReference>
<dbReference type="Proteomes" id="UP000000428">
    <property type="component" value="Chromosome"/>
</dbReference>
<dbReference type="GO" id="GO:0009986">
    <property type="term" value="C:cell surface"/>
    <property type="evidence" value="ECO:0007669"/>
    <property type="project" value="UniProtKB-SubCell"/>
</dbReference>
<dbReference type="GO" id="GO:0005576">
    <property type="term" value="C:extracellular region"/>
    <property type="evidence" value="ECO:0007669"/>
    <property type="project" value="UniProtKB-SubCell"/>
</dbReference>
<dbReference type="GO" id="GO:0000015">
    <property type="term" value="C:phosphopyruvate hydratase complex"/>
    <property type="evidence" value="ECO:0007669"/>
    <property type="project" value="InterPro"/>
</dbReference>
<dbReference type="GO" id="GO:0000287">
    <property type="term" value="F:magnesium ion binding"/>
    <property type="evidence" value="ECO:0007669"/>
    <property type="project" value="UniProtKB-UniRule"/>
</dbReference>
<dbReference type="GO" id="GO:0004634">
    <property type="term" value="F:phosphopyruvate hydratase activity"/>
    <property type="evidence" value="ECO:0007669"/>
    <property type="project" value="UniProtKB-UniRule"/>
</dbReference>
<dbReference type="GO" id="GO:0006096">
    <property type="term" value="P:glycolytic process"/>
    <property type="evidence" value="ECO:0007669"/>
    <property type="project" value="UniProtKB-UniRule"/>
</dbReference>
<dbReference type="CDD" id="cd03313">
    <property type="entry name" value="enolase"/>
    <property type="match status" value="1"/>
</dbReference>
<dbReference type="FunFam" id="3.20.20.120:FF:000001">
    <property type="entry name" value="Enolase"/>
    <property type="match status" value="1"/>
</dbReference>
<dbReference type="FunFam" id="3.30.390.10:FF:000001">
    <property type="entry name" value="Enolase"/>
    <property type="match status" value="1"/>
</dbReference>
<dbReference type="Gene3D" id="3.20.20.120">
    <property type="entry name" value="Enolase-like C-terminal domain"/>
    <property type="match status" value="1"/>
</dbReference>
<dbReference type="Gene3D" id="3.30.390.10">
    <property type="entry name" value="Enolase-like, N-terminal domain"/>
    <property type="match status" value="1"/>
</dbReference>
<dbReference type="HAMAP" id="MF_00318">
    <property type="entry name" value="Enolase"/>
    <property type="match status" value="1"/>
</dbReference>
<dbReference type="InterPro" id="IPR000941">
    <property type="entry name" value="Enolase"/>
</dbReference>
<dbReference type="InterPro" id="IPR036849">
    <property type="entry name" value="Enolase-like_C_sf"/>
</dbReference>
<dbReference type="InterPro" id="IPR029017">
    <property type="entry name" value="Enolase-like_N"/>
</dbReference>
<dbReference type="InterPro" id="IPR020810">
    <property type="entry name" value="Enolase_C"/>
</dbReference>
<dbReference type="InterPro" id="IPR020809">
    <property type="entry name" value="Enolase_CS"/>
</dbReference>
<dbReference type="InterPro" id="IPR020811">
    <property type="entry name" value="Enolase_N"/>
</dbReference>
<dbReference type="NCBIfam" id="TIGR01060">
    <property type="entry name" value="eno"/>
    <property type="match status" value="1"/>
</dbReference>
<dbReference type="PANTHER" id="PTHR11902">
    <property type="entry name" value="ENOLASE"/>
    <property type="match status" value="1"/>
</dbReference>
<dbReference type="PANTHER" id="PTHR11902:SF1">
    <property type="entry name" value="ENOLASE"/>
    <property type="match status" value="1"/>
</dbReference>
<dbReference type="Pfam" id="PF00113">
    <property type="entry name" value="Enolase_C"/>
    <property type="match status" value="1"/>
</dbReference>
<dbReference type="Pfam" id="PF03952">
    <property type="entry name" value="Enolase_N"/>
    <property type="match status" value="1"/>
</dbReference>
<dbReference type="PIRSF" id="PIRSF001400">
    <property type="entry name" value="Enolase"/>
    <property type="match status" value="1"/>
</dbReference>
<dbReference type="PRINTS" id="PR00148">
    <property type="entry name" value="ENOLASE"/>
</dbReference>
<dbReference type="SFLD" id="SFLDS00001">
    <property type="entry name" value="Enolase"/>
    <property type="match status" value="1"/>
</dbReference>
<dbReference type="SFLD" id="SFLDF00002">
    <property type="entry name" value="enolase"/>
    <property type="match status" value="1"/>
</dbReference>
<dbReference type="SMART" id="SM01192">
    <property type="entry name" value="Enolase_C"/>
    <property type="match status" value="1"/>
</dbReference>
<dbReference type="SMART" id="SM01193">
    <property type="entry name" value="Enolase_N"/>
    <property type="match status" value="1"/>
</dbReference>
<dbReference type="SUPFAM" id="SSF51604">
    <property type="entry name" value="Enolase C-terminal domain-like"/>
    <property type="match status" value="1"/>
</dbReference>
<dbReference type="SUPFAM" id="SSF54826">
    <property type="entry name" value="Enolase N-terminal domain-like"/>
    <property type="match status" value="1"/>
</dbReference>
<dbReference type="PROSITE" id="PS00164">
    <property type="entry name" value="ENOLASE"/>
    <property type="match status" value="1"/>
</dbReference>
<proteinExistence type="inferred from homology"/>
<name>ENO_STRAW</name>
<keyword id="KW-0963">Cytoplasm</keyword>
<keyword id="KW-0324">Glycolysis</keyword>
<keyword id="KW-0456">Lyase</keyword>
<keyword id="KW-0460">Magnesium</keyword>
<keyword id="KW-0479">Metal-binding</keyword>
<keyword id="KW-1185">Reference proteome</keyword>
<keyword id="KW-0964">Secreted</keyword>
<comment type="function">
    <text evidence="1">Catalyzes the reversible conversion of 2-phosphoglycerate (2-PG) into phosphoenolpyruvate (PEP). It is essential for the degradation of carbohydrates via glycolysis.</text>
</comment>
<comment type="catalytic activity">
    <reaction evidence="1">
        <text>(2R)-2-phosphoglycerate = phosphoenolpyruvate + H2O</text>
        <dbReference type="Rhea" id="RHEA:10164"/>
        <dbReference type="ChEBI" id="CHEBI:15377"/>
        <dbReference type="ChEBI" id="CHEBI:58289"/>
        <dbReference type="ChEBI" id="CHEBI:58702"/>
        <dbReference type="EC" id="4.2.1.11"/>
    </reaction>
</comment>
<comment type="cofactor">
    <cofactor evidence="1">
        <name>Mg(2+)</name>
        <dbReference type="ChEBI" id="CHEBI:18420"/>
    </cofactor>
    <text evidence="1">Binds a second Mg(2+) ion via substrate during catalysis.</text>
</comment>
<comment type="pathway">
    <text evidence="1">Carbohydrate degradation; glycolysis; pyruvate from D-glyceraldehyde 3-phosphate: step 4/5.</text>
</comment>
<comment type="subcellular location">
    <subcellularLocation>
        <location evidence="1">Cytoplasm</location>
    </subcellularLocation>
    <subcellularLocation>
        <location evidence="1">Secreted</location>
    </subcellularLocation>
    <subcellularLocation>
        <location evidence="1">Cell surface</location>
    </subcellularLocation>
    <text evidence="1">Fractions of enolase are present in both the cytoplasm and on the cell surface.</text>
</comment>
<comment type="similarity">
    <text evidence="1">Belongs to the enolase family.</text>
</comment>
<sequence length="428" mass="45869">MPSIDVVVAREILDSRGNPTVEVEVGLDDGSTGRAAVPSGASTGAFEAIELRDGDPNRYQGKGVEKAVLAVIEQIGPELVGYDATEQRLIDQAMFDLDATDNKGSLGANAILGVSLAVAHAASEASDLPLFRYLGGPNAHLLPVPMMNILNGGSHADSNVDIQEFMIAPIGAESFSEALRWGAEVYHTLKKVLKTKGLSTGLGDEGGFAPNLESNRAALDLIIEAIKQAGYIPGEQIALALDVAASEFYKDGKYEFEGKSRSAAEMTEYYEELVSAYPLVSIEDPLYEDDWAGWKVITDKLGDKVQIVGDDLFVTNPERLARGIEEGSANALLVKVNQIGSLTETLDAVELAQRNGFKCMMSHRSGETEDVTIADLAVAVNCGQIKTGAPARSDRVAKYNQLLRIEEILDDAAEYAGRSAFPRFRSAN</sequence>
<accession>Q82HH5</accession>
<feature type="chain" id="PRO_0000133975" description="Enolase">
    <location>
        <begin position="1"/>
        <end position="428"/>
    </location>
</feature>
<feature type="active site" description="Proton donor" evidence="1">
    <location>
        <position position="205"/>
    </location>
</feature>
<feature type="active site" description="Proton acceptor" evidence="1">
    <location>
        <position position="335"/>
    </location>
</feature>
<feature type="binding site" evidence="1">
    <location>
        <position position="163"/>
    </location>
    <ligand>
        <name>(2R)-2-phosphoglycerate</name>
        <dbReference type="ChEBI" id="CHEBI:58289"/>
    </ligand>
</feature>
<feature type="binding site" evidence="1">
    <location>
        <position position="242"/>
    </location>
    <ligand>
        <name>Mg(2+)</name>
        <dbReference type="ChEBI" id="CHEBI:18420"/>
    </ligand>
</feature>
<feature type="binding site" evidence="1">
    <location>
        <position position="283"/>
    </location>
    <ligand>
        <name>Mg(2+)</name>
        <dbReference type="ChEBI" id="CHEBI:18420"/>
    </ligand>
</feature>
<feature type="binding site" evidence="1">
    <location>
        <position position="310"/>
    </location>
    <ligand>
        <name>Mg(2+)</name>
        <dbReference type="ChEBI" id="CHEBI:18420"/>
    </ligand>
</feature>
<feature type="binding site" evidence="1">
    <location>
        <position position="335"/>
    </location>
    <ligand>
        <name>(2R)-2-phosphoglycerate</name>
        <dbReference type="ChEBI" id="CHEBI:58289"/>
    </ligand>
</feature>
<feature type="binding site" evidence="1">
    <location>
        <position position="364"/>
    </location>
    <ligand>
        <name>(2R)-2-phosphoglycerate</name>
        <dbReference type="ChEBI" id="CHEBI:58289"/>
    </ligand>
</feature>
<feature type="binding site" evidence="1">
    <location>
        <position position="365"/>
    </location>
    <ligand>
        <name>(2R)-2-phosphoglycerate</name>
        <dbReference type="ChEBI" id="CHEBI:58289"/>
    </ligand>
</feature>
<feature type="binding site" evidence="1">
    <location>
        <position position="386"/>
    </location>
    <ligand>
        <name>(2R)-2-phosphoglycerate</name>
        <dbReference type="ChEBI" id="CHEBI:58289"/>
    </ligand>
</feature>